<comment type="function">
    <text evidence="1">Dual specificity enzyme that catalyzes the synthesis of pseudouridine from uracil-746 in 23S ribosomal RNA and from uracil-32 in the anticodon stem and loop of transfer RNAs.</text>
</comment>
<comment type="catalytic activity">
    <reaction evidence="1">
        <text>uridine(32) in tRNA = pseudouridine(32) in tRNA</text>
        <dbReference type="Rhea" id="RHEA:42544"/>
        <dbReference type="Rhea" id="RHEA-COMP:10107"/>
        <dbReference type="Rhea" id="RHEA-COMP:10108"/>
        <dbReference type="ChEBI" id="CHEBI:65314"/>
        <dbReference type="ChEBI" id="CHEBI:65315"/>
        <dbReference type="EC" id="5.4.99.28"/>
    </reaction>
</comment>
<comment type="catalytic activity">
    <reaction evidence="1">
        <text>uridine(746) in 23S rRNA = pseudouridine(746) in 23S rRNA</text>
        <dbReference type="Rhea" id="RHEA:42548"/>
        <dbReference type="Rhea" id="RHEA-COMP:10109"/>
        <dbReference type="Rhea" id="RHEA-COMP:10110"/>
        <dbReference type="ChEBI" id="CHEBI:65314"/>
        <dbReference type="ChEBI" id="CHEBI:65315"/>
        <dbReference type="EC" id="5.4.99.29"/>
    </reaction>
</comment>
<comment type="similarity">
    <text evidence="2">Belongs to the pseudouridine synthase RluA family.</text>
</comment>
<name>RLUA_SALTY</name>
<protein>
    <recommendedName>
        <fullName evidence="1">Dual-specificity RNA pseudouridine synthase RluA</fullName>
        <ecNumber evidence="1">5.4.99.28</ecNumber>
        <ecNumber evidence="1">5.4.99.29</ecNumber>
    </recommendedName>
    <alternativeName>
        <fullName evidence="1">23S rRNA pseudouridine(746) synthase</fullName>
    </alternativeName>
    <alternativeName>
        <fullName evidence="1">Ribosomal large subunit pseudouridine synthase A</fullName>
    </alternativeName>
    <alternativeName>
        <fullName evidence="1">rRNA pseudouridylate synthase A</fullName>
    </alternativeName>
    <alternativeName>
        <fullName evidence="1">rRNA-uridine isomerase A</fullName>
    </alternativeName>
    <alternativeName>
        <fullName evidence="1">tRNA pseudouridine(32) synthase</fullName>
    </alternativeName>
</protein>
<accession>Q8ZRV9</accession>
<sequence length="219" mass="24798">MGMENYNPPQEPWLVILYQDEHIMVVNKPSGLLSVPGRLEAHKDSIMTRIQRDYPQAESVHRLDMATSGVIVVALTKAAERELKRQFREREPKKQYVARVWGHPSPAEGLVDLPLICDWPNRPKQKVCYETGKPAQTEYNVVEFAADNTARVVLKPITGRSHQLRVHMLALGHPILGDRFYASPEALSLAPRLQLHAEMLTITHPAYGNSMTFKVPADF</sequence>
<evidence type="ECO:0000250" key="1">
    <source>
        <dbReference type="UniProtKB" id="P0AA37"/>
    </source>
</evidence>
<evidence type="ECO:0000305" key="2"/>
<dbReference type="EC" id="5.4.99.28" evidence="1"/>
<dbReference type="EC" id="5.4.99.29" evidence="1"/>
<dbReference type="EMBL" id="AE006468">
    <property type="protein sequence ID" value="AAL19059.1"/>
    <property type="molecule type" value="Genomic_DNA"/>
</dbReference>
<dbReference type="RefSeq" id="NP_459100.1">
    <property type="nucleotide sequence ID" value="NC_003197.2"/>
</dbReference>
<dbReference type="RefSeq" id="WP_000525196.1">
    <property type="nucleotide sequence ID" value="NC_003197.2"/>
</dbReference>
<dbReference type="SMR" id="Q8ZRV9"/>
<dbReference type="STRING" id="99287.STM0095"/>
<dbReference type="PaxDb" id="99287-STM0095"/>
<dbReference type="GeneID" id="1251613"/>
<dbReference type="KEGG" id="stm:STM0095"/>
<dbReference type="PATRIC" id="fig|99287.12.peg.99"/>
<dbReference type="HOGENOM" id="CLU_016902_11_1_6"/>
<dbReference type="OMA" id="YGFCEPA"/>
<dbReference type="PhylomeDB" id="Q8ZRV9"/>
<dbReference type="BioCyc" id="SENT99287:STM0095-MONOMER"/>
<dbReference type="Proteomes" id="UP000001014">
    <property type="component" value="Chromosome"/>
</dbReference>
<dbReference type="GO" id="GO:0160142">
    <property type="term" value="F:23S rRNA pseudouridine(746) synthase activity"/>
    <property type="evidence" value="ECO:0007669"/>
    <property type="project" value="UniProtKB-EC"/>
</dbReference>
<dbReference type="GO" id="GO:0009982">
    <property type="term" value="F:pseudouridine synthase activity"/>
    <property type="evidence" value="ECO:0000318"/>
    <property type="project" value="GO_Central"/>
</dbReference>
<dbReference type="GO" id="GO:0003723">
    <property type="term" value="F:RNA binding"/>
    <property type="evidence" value="ECO:0007669"/>
    <property type="project" value="InterPro"/>
</dbReference>
<dbReference type="GO" id="GO:0160151">
    <property type="term" value="F:tRNA pseudouridine(32) synthase activity"/>
    <property type="evidence" value="ECO:0007669"/>
    <property type="project" value="UniProtKB-EC"/>
</dbReference>
<dbReference type="GO" id="GO:0000455">
    <property type="term" value="P:enzyme-directed rRNA pseudouridine synthesis"/>
    <property type="evidence" value="ECO:0000318"/>
    <property type="project" value="GO_Central"/>
</dbReference>
<dbReference type="GO" id="GO:0008033">
    <property type="term" value="P:tRNA processing"/>
    <property type="evidence" value="ECO:0007669"/>
    <property type="project" value="UniProtKB-KW"/>
</dbReference>
<dbReference type="CDD" id="cd02869">
    <property type="entry name" value="PseudoU_synth_RluA_like"/>
    <property type="match status" value="1"/>
</dbReference>
<dbReference type="FunFam" id="3.30.2350.10:FF:000005">
    <property type="entry name" value="Pseudouridine synthase"/>
    <property type="match status" value="1"/>
</dbReference>
<dbReference type="Gene3D" id="3.30.2350.10">
    <property type="entry name" value="Pseudouridine synthase"/>
    <property type="match status" value="1"/>
</dbReference>
<dbReference type="InterPro" id="IPR020103">
    <property type="entry name" value="PsdUridine_synth_cat_dom_sf"/>
</dbReference>
<dbReference type="InterPro" id="IPR006224">
    <property type="entry name" value="PsdUridine_synth_RluA-like_CS"/>
</dbReference>
<dbReference type="InterPro" id="IPR006225">
    <property type="entry name" value="PsdUridine_synth_RluC/D"/>
</dbReference>
<dbReference type="InterPro" id="IPR006145">
    <property type="entry name" value="PsdUridine_synth_RsuA/RluA"/>
</dbReference>
<dbReference type="InterPro" id="IPR050188">
    <property type="entry name" value="RluA_PseudoU_synthase"/>
</dbReference>
<dbReference type="NCBIfam" id="NF007543">
    <property type="entry name" value="PRK10158.1"/>
    <property type="match status" value="1"/>
</dbReference>
<dbReference type="NCBIfam" id="TIGR00005">
    <property type="entry name" value="rluA_subfam"/>
    <property type="match status" value="1"/>
</dbReference>
<dbReference type="PANTHER" id="PTHR21600:SF91">
    <property type="entry name" value="DUAL-SPECIFICITY RNA PSEUDOURIDINE SYNTHASE RLUA"/>
    <property type="match status" value="1"/>
</dbReference>
<dbReference type="PANTHER" id="PTHR21600">
    <property type="entry name" value="MITOCHONDRIAL RNA PSEUDOURIDINE SYNTHASE"/>
    <property type="match status" value="1"/>
</dbReference>
<dbReference type="Pfam" id="PF00849">
    <property type="entry name" value="PseudoU_synth_2"/>
    <property type="match status" value="1"/>
</dbReference>
<dbReference type="SUPFAM" id="SSF55120">
    <property type="entry name" value="Pseudouridine synthase"/>
    <property type="match status" value="1"/>
</dbReference>
<dbReference type="PROSITE" id="PS01129">
    <property type="entry name" value="PSI_RLU"/>
    <property type="match status" value="1"/>
</dbReference>
<keyword id="KW-0413">Isomerase</keyword>
<keyword id="KW-1185">Reference proteome</keyword>
<keyword id="KW-0698">rRNA processing</keyword>
<keyword id="KW-0819">tRNA processing</keyword>
<proteinExistence type="inferred from homology"/>
<gene>
    <name type="primary">rluA</name>
    <name type="ordered locus">STM0095</name>
</gene>
<organism>
    <name type="scientific">Salmonella typhimurium (strain LT2 / SGSC1412 / ATCC 700720)</name>
    <dbReference type="NCBI Taxonomy" id="99287"/>
    <lineage>
        <taxon>Bacteria</taxon>
        <taxon>Pseudomonadati</taxon>
        <taxon>Pseudomonadota</taxon>
        <taxon>Gammaproteobacteria</taxon>
        <taxon>Enterobacterales</taxon>
        <taxon>Enterobacteriaceae</taxon>
        <taxon>Salmonella</taxon>
    </lineage>
</organism>
<reference key="1">
    <citation type="journal article" date="2001" name="Nature">
        <title>Complete genome sequence of Salmonella enterica serovar Typhimurium LT2.</title>
        <authorList>
            <person name="McClelland M."/>
            <person name="Sanderson K.E."/>
            <person name="Spieth J."/>
            <person name="Clifton S.W."/>
            <person name="Latreille P."/>
            <person name="Courtney L."/>
            <person name="Porwollik S."/>
            <person name="Ali J."/>
            <person name="Dante M."/>
            <person name="Du F."/>
            <person name="Hou S."/>
            <person name="Layman D."/>
            <person name="Leonard S."/>
            <person name="Nguyen C."/>
            <person name="Scott K."/>
            <person name="Holmes A."/>
            <person name="Grewal N."/>
            <person name="Mulvaney E."/>
            <person name="Ryan E."/>
            <person name="Sun H."/>
            <person name="Florea L."/>
            <person name="Miller W."/>
            <person name="Stoneking T."/>
            <person name="Nhan M."/>
            <person name="Waterston R."/>
            <person name="Wilson R.K."/>
        </authorList>
    </citation>
    <scope>NUCLEOTIDE SEQUENCE [LARGE SCALE GENOMIC DNA]</scope>
    <source>
        <strain>LT2 / SGSC1412 / ATCC 700720</strain>
    </source>
</reference>
<feature type="initiator methionine" description="Removed" evidence="1">
    <location>
        <position position="1"/>
    </location>
</feature>
<feature type="chain" id="PRO_0000162658" description="Dual-specificity RNA pseudouridine synthase RluA">
    <location>
        <begin position="2"/>
        <end position="219"/>
    </location>
</feature>
<feature type="active site" evidence="1">
    <location>
        <position position="64"/>
    </location>
</feature>